<dbReference type="EC" id="2.8.1.13" evidence="1"/>
<dbReference type="EMBL" id="CP000440">
    <property type="protein sequence ID" value="ABI86150.1"/>
    <property type="molecule type" value="Genomic_DNA"/>
</dbReference>
<dbReference type="RefSeq" id="WP_011655990.1">
    <property type="nucleotide sequence ID" value="NC_008390.1"/>
</dbReference>
<dbReference type="SMR" id="Q0BI73"/>
<dbReference type="GeneID" id="93083993"/>
<dbReference type="KEGG" id="bam:Bamb_0591"/>
<dbReference type="PATRIC" id="fig|339670.21.peg.1006"/>
<dbReference type="eggNOG" id="COG0482">
    <property type="taxonomic scope" value="Bacteria"/>
</dbReference>
<dbReference type="Proteomes" id="UP000000662">
    <property type="component" value="Chromosome 1"/>
</dbReference>
<dbReference type="GO" id="GO:0005737">
    <property type="term" value="C:cytoplasm"/>
    <property type="evidence" value="ECO:0007669"/>
    <property type="project" value="UniProtKB-SubCell"/>
</dbReference>
<dbReference type="GO" id="GO:0005524">
    <property type="term" value="F:ATP binding"/>
    <property type="evidence" value="ECO:0007669"/>
    <property type="project" value="UniProtKB-KW"/>
</dbReference>
<dbReference type="GO" id="GO:0000049">
    <property type="term" value="F:tRNA binding"/>
    <property type="evidence" value="ECO:0007669"/>
    <property type="project" value="UniProtKB-KW"/>
</dbReference>
<dbReference type="GO" id="GO:0103016">
    <property type="term" value="F:tRNA-uridine 2-sulfurtransferase activity"/>
    <property type="evidence" value="ECO:0007669"/>
    <property type="project" value="UniProtKB-EC"/>
</dbReference>
<dbReference type="GO" id="GO:0002143">
    <property type="term" value="P:tRNA wobble position uridine thiolation"/>
    <property type="evidence" value="ECO:0007669"/>
    <property type="project" value="TreeGrafter"/>
</dbReference>
<dbReference type="CDD" id="cd01998">
    <property type="entry name" value="MnmA_TRMU-like"/>
    <property type="match status" value="1"/>
</dbReference>
<dbReference type="FunFam" id="2.30.30.280:FF:000001">
    <property type="entry name" value="tRNA-specific 2-thiouridylase MnmA"/>
    <property type="match status" value="1"/>
</dbReference>
<dbReference type="FunFam" id="2.40.30.10:FF:000023">
    <property type="entry name" value="tRNA-specific 2-thiouridylase MnmA"/>
    <property type="match status" value="1"/>
</dbReference>
<dbReference type="FunFam" id="3.40.50.620:FF:000004">
    <property type="entry name" value="tRNA-specific 2-thiouridylase MnmA"/>
    <property type="match status" value="1"/>
</dbReference>
<dbReference type="Gene3D" id="2.30.30.280">
    <property type="entry name" value="Adenine nucleotide alpha hydrolases-like domains"/>
    <property type="match status" value="1"/>
</dbReference>
<dbReference type="Gene3D" id="3.40.50.620">
    <property type="entry name" value="HUPs"/>
    <property type="match status" value="1"/>
</dbReference>
<dbReference type="Gene3D" id="2.40.30.10">
    <property type="entry name" value="Translation factors"/>
    <property type="match status" value="1"/>
</dbReference>
<dbReference type="HAMAP" id="MF_00144">
    <property type="entry name" value="tRNA_thiouridyl_MnmA"/>
    <property type="match status" value="1"/>
</dbReference>
<dbReference type="InterPro" id="IPR004506">
    <property type="entry name" value="MnmA-like"/>
</dbReference>
<dbReference type="InterPro" id="IPR046885">
    <property type="entry name" value="MnmA-like_C"/>
</dbReference>
<dbReference type="InterPro" id="IPR046884">
    <property type="entry name" value="MnmA-like_central"/>
</dbReference>
<dbReference type="InterPro" id="IPR023382">
    <property type="entry name" value="MnmA-like_central_sf"/>
</dbReference>
<dbReference type="InterPro" id="IPR014729">
    <property type="entry name" value="Rossmann-like_a/b/a_fold"/>
</dbReference>
<dbReference type="NCBIfam" id="NF001138">
    <property type="entry name" value="PRK00143.1"/>
    <property type="match status" value="1"/>
</dbReference>
<dbReference type="NCBIfam" id="TIGR00420">
    <property type="entry name" value="trmU"/>
    <property type="match status" value="1"/>
</dbReference>
<dbReference type="PANTHER" id="PTHR11933:SF5">
    <property type="entry name" value="MITOCHONDRIAL TRNA-SPECIFIC 2-THIOURIDYLASE 1"/>
    <property type="match status" value="1"/>
</dbReference>
<dbReference type="PANTHER" id="PTHR11933">
    <property type="entry name" value="TRNA 5-METHYLAMINOMETHYL-2-THIOURIDYLATE -METHYLTRANSFERASE"/>
    <property type="match status" value="1"/>
</dbReference>
<dbReference type="Pfam" id="PF03054">
    <property type="entry name" value="tRNA_Me_trans"/>
    <property type="match status" value="1"/>
</dbReference>
<dbReference type="Pfam" id="PF20258">
    <property type="entry name" value="tRNA_Me_trans_C"/>
    <property type="match status" value="1"/>
</dbReference>
<dbReference type="Pfam" id="PF20259">
    <property type="entry name" value="tRNA_Me_trans_M"/>
    <property type="match status" value="1"/>
</dbReference>
<dbReference type="SUPFAM" id="SSF52402">
    <property type="entry name" value="Adenine nucleotide alpha hydrolases-like"/>
    <property type="match status" value="1"/>
</dbReference>
<name>MNMA_BURCM</name>
<sequence length="384" mass="41914">MTKRRVVVGMSGGVDSSVTAWLLKEQGYDVVGLFMKNWEDDDDGEYCSTRQDWIDVVSVADLIGIDVEAVNFAAEYKDRVFAEFLREYSAGRTPNPDVLCNAEIKFKAFLDHAMSLDAEMIATGHYARVRERDGRFELLKAFDHTKDQSYFLHRLNQAQLSKTMFPLGEIPKTKVREIAAQIGLPNAKKKDSTGICFIGERPFRDFLNRYLPTKPGPMKTPDGKVIGEHIGLAFYTFGQRKGIGLGGSKDGSGEPWFVAAKDIASNTLYVVQGHDHPWLLSRQLVAGNVSWVAGEPPADGFSCGAKTRYRQADAACSFGRADGERFSLAFDDAQWAVTPGQSAVLYDGEICLGGGIIEFAATGQPGQTAPAPAAGHTGALAEAR</sequence>
<evidence type="ECO:0000255" key="1">
    <source>
        <dbReference type="HAMAP-Rule" id="MF_00144"/>
    </source>
</evidence>
<reference key="1">
    <citation type="submission" date="2006-08" db="EMBL/GenBank/DDBJ databases">
        <title>Complete sequence of chromosome 1 of Burkholderia cepacia AMMD.</title>
        <authorList>
            <person name="Copeland A."/>
            <person name="Lucas S."/>
            <person name="Lapidus A."/>
            <person name="Barry K."/>
            <person name="Detter J.C."/>
            <person name="Glavina del Rio T."/>
            <person name="Hammon N."/>
            <person name="Israni S."/>
            <person name="Pitluck S."/>
            <person name="Bruce D."/>
            <person name="Chain P."/>
            <person name="Malfatti S."/>
            <person name="Shin M."/>
            <person name="Vergez L."/>
            <person name="Schmutz J."/>
            <person name="Larimer F."/>
            <person name="Land M."/>
            <person name="Hauser L."/>
            <person name="Kyrpides N."/>
            <person name="Kim E."/>
            <person name="Parke J."/>
            <person name="Coenye T."/>
            <person name="Konstantinidis K."/>
            <person name="Ramette A."/>
            <person name="Tiedje J."/>
            <person name="Richardson P."/>
        </authorList>
    </citation>
    <scope>NUCLEOTIDE SEQUENCE [LARGE SCALE GENOMIC DNA]</scope>
    <source>
        <strain>ATCC BAA-244 / DSM 16087 / CCUG 44356 / LMG 19182 / AMMD</strain>
    </source>
</reference>
<keyword id="KW-0067">ATP-binding</keyword>
<keyword id="KW-0963">Cytoplasm</keyword>
<keyword id="KW-1015">Disulfide bond</keyword>
<keyword id="KW-0547">Nucleotide-binding</keyword>
<keyword id="KW-0694">RNA-binding</keyword>
<keyword id="KW-0808">Transferase</keyword>
<keyword id="KW-0819">tRNA processing</keyword>
<keyword id="KW-0820">tRNA-binding</keyword>
<gene>
    <name evidence="1" type="primary">mnmA</name>
    <name type="ordered locus">Bamb_0591</name>
</gene>
<comment type="function">
    <text evidence="1">Catalyzes the 2-thiolation of uridine at the wobble position (U34) of tRNA, leading to the formation of s(2)U34.</text>
</comment>
<comment type="catalytic activity">
    <reaction evidence="1">
        <text>S-sulfanyl-L-cysteinyl-[protein] + uridine(34) in tRNA + AH2 + ATP = 2-thiouridine(34) in tRNA + L-cysteinyl-[protein] + A + AMP + diphosphate + H(+)</text>
        <dbReference type="Rhea" id="RHEA:47032"/>
        <dbReference type="Rhea" id="RHEA-COMP:10131"/>
        <dbReference type="Rhea" id="RHEA-COMP:11726"/>
        <dbReference type="Rhea" id="RHEA-COMP:11727"/>
        <dbReference type="Rhea" id="RHEA-COMP:11728"/>
        <dbReference type="ChEBI" id="CHEBI:13193"/>
        <dbReference type="ChEBI" id="CHEBI:15378"/>
        <dbReference type="ChEBI" id="CHEBI:17499"/>
        <dbReference type="ChEBI" id="CHEBI:29950"/>
        <dbReference type="ChEBI" id="CHEBI:30616"/>
        <dbReference type="ChEBI" id="CHEBI:33019"/>
        <dbReference type="ChEBI" id="CHEBI:61963"/>
        <dbReference type="ChEBI" id="CHEBI:65315"/>
        <dbReference type="ChEBI" id="CHEBI:87170"/>
        <dbReference type="ChEBI" id="CHEBI:456215"/>
        <dbReference type="EC" id="2.8.1.13"/>
    </reaction>
</comment>
<comment type="subcellular location">
    <subcellularLocation>
        <location evidence="1">Cytoplasm</location>
    </subcellularLocation>
</comment>
<comment type="similarity">
    <text evidence="1">Belongs to the MnmA/TRMU family.</text>
</comment>
<protein>
    <recommendedName>
        <fullName evidence="1">tRNA-specific 2-thiouridylase MnmA</fullName>
        <ecNumber evidence="1">2.8.1.13</ecNumber>
    </recommendedName>
</protein>
<accession>Q0BI73</accession>
<proteinExistence type="inferred from homology"/>
<feature type="chain" id="PRO_0000349548" description="tRNA-specific 2-thiouridylase MnmA">
    <location>
        <begin position="1"/>
        <end position="384"/>
    </location>
</feature>
<feature type="region of interest" description="Interaction with target base in tRNA" evidence="1">
    <location>
        <begin position="95"/>
        <end position="97"/>
    </location>
</feature>
<feature type="region of interest" description="Interaction with tRNA" evidence="1">
    <location>
        <begin position="146"/>
        <end position="148"/>
    </location>
</feature>
<feature type="region of interest" description="Interaction with tRNA" evidence="1">
    <location>
        <begin position="308"/>
        <end position="309"/>
    </location>
</feature>
<feature type="active site" description="Nucleophile" evidence="1">
    <location>
        <position position="100"/>
    </location>
</feature>
<feature type="active site" description="Cysteine persulfide intermediate" evidence="1">
    <location>
        <position position="196"/>
    </location>
</feature>
<feature type="binding site" evidence="1">
    <location>
        <begin position="9"/>
        <end position="16"/>
    </location>
    <ligand>
        <name>ATP</name>
        <dbReference type="ChEBI" id="CHEBI:30616"/>
    </ligand>
</feature>
<feature type="binding site" evidence="1">
    <location>
        <position position="35"/>
    </location>
    <ligand>
        <name>ATP</name>
        <dbReference type="ChEBI" id="CHEBI:30616"/>
    </ligand>
</feature>
<feature type="binding site" evidence="1">
    <location>
        <position position="124"/>
    </location>
    <ligand>
        <name>ATP</name>
        <dbReference type="ChEBI" id="CHEBI:30616"/>
    </ligand>
</feature>
<feature type="site" description="Interaction with tRNA" evidence="1">
    <location>
        <position position="125"/>
    </location>
</feature>
<feature type="site" description="Interaction with tRNA" evidence="1">
    <location>
        <position position="341"/>
    </location>
</feature>
<feature type="disulfide bond" description="Alternate" evidence="1">
    <location>
        <begin position="100"/>
        <end position="196"/>
    </location>
</feature>
<organism>
    <name type="scientific">Burkholderia ambifaria (strain ATCC BAA-244 / DSM 16087 / CCUG 44356 / LMG 19182 / AMMD)</name>
    <name type="common">Burkholderia cepacia (strain AMMD)</name>
    <dbReference type="NCBI Taxonomy" id="339670"/>
    <lineage>
        <taxon>Bacteria</taxon>
        <taxon>Pseudomonadati</taxon>
        <taxon>Pseudomonadota</taxon>
        <taxon>Betaproteobacteria</taxon>
        <taxon>Burkholderiales</taxon>
        <taxon>Burkholderiaceae</taxon>
        <taxon>Burkholderia</taxon>
        <taxon>Burkholderia cepacia complex</taxon>
    </lineage>
</organism>